<dbReference type="EC" id="3.4.23.-"/>
<dbReference type="PIR" id="S01799">
    <property type="entry name" value="S01799"/>
</dbReference>
<dbReference type="SMR" id="P20140"/>
<dbReference type="MEROPS" id="A01.088"/>
<dbReference type="GO" id="GO:0004190">
    <property type="term" value="F:aspartic-type endopeptidase activity"/>
    <property type="evidence" value="ECO:0007669"/>
    <property type="project" value="UniProtKB-KW"/>
</dbReference>
<dbReference type="GO" id="GO:0006508">
    <property type="term" value="P:proteolysis"/>
    <property type="evidence" value="ECO:0007669"/>
    <property type="project" value="UniProtKB-KW"/>
</dbReference>
<dbReference type="Gene3D" id="6.10.140.60">
    <property type="match status" value="1"/>
</dbReference>
<dbReference type="Gene3D" id="2.40.70.10">
    <property type="entry name" value="Acid Proteases"/>
    <property type="match status" value="1"/>
</dbReference>
<dbReference type="InterPro" id="IPR012848">
    <property type="entry name" value="Aspartic_peptidase_N"/>
</dbReference>
<dbReference type="InterPro" id="IPR033121">
    <property type="entry name" value="PEPTIDASE_A1"/>
</dbReference>
<dbReference type="InterPro" id="IPR021109">
    <property type="entry name" value="Peptidase_aspartic_dom_sf"/>
</dbReference>
<dbReference type="Pfam" id="PF07966">
    <property type="entry name" value="A1_Propeptide"/>
    <property type="match status" value="1"/>
</dbReference>
<dbReference type="Pfam" id="PF00026">
    <property type="entry name" value="Asp"/>
    <property type="match status" value="1"/>
</dbReference>
<dbReference type="SUPFAM" id="SSF50630">
    <property type="entry name" value="Acid proteases"/>
    <property type="match status" value="1"/>
</dbReference>
<dbReference type="PROSITE" id="PS51767">
    <property type="entry name" value="PEPTIDASE_A1"/>
    <property type="match status" value="1"/>
</dbReference>
<reference key="1">
    <citation type="journal article" date="1988" name="Eur. J. Biochem.">
        <title>Tuna pepsinogens and pepsins. Purification, characterization and amino-terminal sequences.</title>
        <authorList>
            <person name="Tanji M."/>
            <person name="Kageyama T."/>
            <person name="Takahashi K."/>
        </authorList>
    </citation>
    <scope>PROTEIN SEQUENCE</scope>
</reference>
<name>PEP2_THUOR</name>
<proteinExistence type="evidence at protein level"/>
<evidence type="ECO:0000255" key="1">
    <source>
        <dbReference type="PROSITE-ProRule" id="PRU01103"/>
    </source>
</evidence>
<evidence type="ECO:0000305" key="2"/>
<keyword id="KW-0064">Aspartyl protease</keyword>
<keyword id="KW-0903">Direct protein sequencing</keyword>
<keyword id="KW-0378">Hydrolase</keyword>
<keyword id="KW-0645">Protease</keyword>
<keyword id="KW-0865">Zymogen</keyword>
<comment type="similarity">
    <text evidence="2">Belongs to the peptidase A1 family.</text>
</comment>
<feature type="propeptide" id="PRO_0000026003" description="Activation peptide">
    <location>
        <begin position="1"/>
        <end position="37"/>
    </location>
</feature>
<feature type="chain" id="PRO_0000026004" description="Pepsin-2">
    <location>
        <begin position="38"/>
        <end position="72" status="greater than"/>
    </location>
</feature>
<feature type="domain" description="Peptidase A1" evidence="1">
    <location>
        <begin position="53"/>
        <end position="72" status="greater than"/>
    </location>
</feature>
<feature type="non-terminal residue">
    <location>
        <position position="72"/>
    </location>
</feature>
<accession>P20140</accession>
<sequence>FHKLPLIKGKTAREELQERGLWEDYRKQYPYHPMAKFYQDGTEPMTNDADLSYYGVVSIGTPPQSFKVIFDT</sequence>
<organism>
    <name type="scientific">Thunnus orientalis</name>
    <name type="common">North Pacific bluefin tuna</name>
    <name type="synonym">Thunnus thynnus orientalis</name>
    <dbReference type="NCBI Taxonomy" id="8238"/>
    <lineage>
        <taxon>Eukaryota</taxon>
        <taxon>Metazoa</taxon>
        <taxon>Chordata</taxon>
        <taxon>Craniata</taxon>
        <taxon>Vertebrata</taxon>
        <taxon>Euteleostomi</taxon>
        <taxon>Actinopterygii</taxon>
        <taxon>Neopterygii</taxon>
        <taxon>Teleostei</taxon>
        <taxon>Neoteleostei</taxon>
        <taxon>Acanthomorphata</taxon>
        <taxon>Pelagiaria</taxon>
        <taxon>Scombriformes</taxon>
        <taxon>Scombridae</taxon>
        <taxon>Thunnus</taxon>
    </lineage>
</organism>
<protein>
    <recommendedName>
        <fullName>Pepsin-2</fullName>
        <ecNumber>3.4.23.-</ecNumber>
    </recommendedName>
</protein>